<accession>Q7WI36</accession>
<proteinExistence type="inferred from homology"/>
<comment type="function">
    <text evidence="1">Nucleotidase that shows phosphatase activity on nucleoside 5'-monophosphates.</text>
</comment>
<comment type="catalytic activity">
    <reaction evidence="1">
        <text>a ribonucleoside 5'-phosphate + H2O = a ribonucleoside + phosphate</text>
        <dbReference type="Rhea" id="RHEA:12484"/>
        <dbReference type="ChEBI" id="CHEBI:15377"/>
        <dbReference type="ChEBI" id="CHEBI:18254"/>
        <dbReference type="ChEBI" id="CHEBI:43474"/>
        <dbReference type="ChEBI" id="CHEBI:58043"/>
        <dbReference type="EC" id="3.1.3.5"/>
    </reaction>
</comment>
<comment type="cofactor">
    <cofactor evidence="1">
        <name>a divalent metal cation</name>
        <dbReference type="ChEBI" id="CHEBI:60240"/>
    </cofactor>
    <text evidence="1">Binds 1 divalent metal cation per subunit.</text>
</comment>
<comment type="subcellular location">
    <subcellularLocation>
        <location evidence="1">Cytoplasm</location>
    </subcellularLocation>
</comment>
<comment type="similarity">
    <text evidence="1">Belongs to the SurE nucleotidase family.</text>
</comment>
<organism>
    <name type="scientific">Bordetella bronchiseptica (strain ATCC BAA-588 / NCTC 13252 / RB50)</name>
    <name type="common">Alcaligenes bronchisepticus</name>
    <dbReference type="NCBI Taxonomy" id="257310"/>
    <lineage>
        <taxon>Bacteria</taxon>
        <taxon>Pseudomonadati</taxon>
        <taxon>Pseudomonadota</taxon>
        <taxon>Betaproteobacteria</taxon>
        <taxon>Burkholderiales</taxon>
        <taxon>Alcaligenaceae</taxon>
        <taxon>Bordetella</taxon>
    </lineage>
</organism>
<reference key="1">
    <citation type="journal article" date="2003" name="Nat. Genet.">
        <title>Comparative analysis of the genome sequences of Bordetella pertussis, Bordetella parapertussis and Bordetella bronchiseptica.</title>
        <authorList>
            <person name="Parkhill J."/>
            <person name="Sebaihia M."/>
            <person name="Preston A."/>
            <person name="Murphy L.D."/>
            <person name="Thomson N.R."/>
            <person name="Harris D.E."/>
            <person name="Holden M.T.G."/>
            <person name="Churcher C.M."/>
            <person name="Bentley S.D."/>
            <person name="Mungall K.L."/>
            <person name="Cerdeno-Tarraga A.-M."/>
            <person name="Temple L."/>
            <person name="James K.D."/>
            <person name="Harris B."/>
            <person name="Quail M.A."/>
            <person name="Achtman M."/>
            <person name="Atkin R."/>
            <person name="Baker S."/>
            <person name="Basham D."/>
            <person name="Bason N."/>
            <person name="Cherevach I."/>
            <person name="Chillingworth T."/>
            <person name="Collins M."/>
            <person name="Cronin A."/>
            <person name="Davis P."/>
            <person name="Doggett J."/>
            <person name="Feltwell T."/>
            <person name="Goble A."/>
            <person name="Hamlin N."/>
            <person name="Hauser H."/>
            <person name="Holroyd S."/>
            <person name="Jagels K."/>
            <person name="Leather S."/>
            <person name="Moule S."/>
            <person name="Norberczak H."/>
            <person name="O'Neil S."/>
            <person name="Ormond D."/>
            <person name="Price C."/>
            <person name="Rabbinowitsch E."/>
            <person name="Rutter S."/>
            <person name="Sanders M."/>
            <person name="Saunders D."/>
            <person name="Seeger K."/>
            <person name="Sharp S."/>
            <person name="Simmonds M."/>
            <person name="Skelton J."/>
            <person name="Squares R."/>
            <person name="Squares S."/>
            <person name="Stevens K."/>
            <person name="Unwin L."/>
            <person name="Whitehead S."/>
            <person name="Barrell B.G."/>
            <person name="Maskell D.J."/>
        </authorList>
    </citation>
    <scope>NUCLEOTIDE SEQUENCE [LARGE SCALE GENOMIC DNA]</scope>
    <source>
        <strain>ATCC BAA-588 / NCTC 13252 / RB50</strain>
    </source>
</reference>
<feature type="chain" id="PRO_0000111790" description="5'-nucleotidase SurE">
    <location>
        <begin position="1"/>
        <end position="252"/>
    </location>
</feature>
<feature type="binding site" evidence="1">
    <location>
        <position position="8"/>
    </location>
    <ligand>
        <name>a divalent metal cation</name>
        <dbReference type="ChEBI" id="CHEBI:60240"/>
    </ligand>
</feature>
<feature type="binding site" evidence="1">
    <location>
        <position position="9"/>
    </location>
    <ligand>
        <name>a divalent metal cation</name>
        <dbReference type="ChEBI" id="CHEBI:60240"/>
    </ligand>
</feature>
<feature type="binding site" evidence="1">
    <location>
        <position position="39"/>
    </location>
    <ligand>
        <name>a divalent metal cation</name>
        <dbReference type="ChEBI" id="CHEBI:60240"/>
    </ligand>
</feature>
<feature type="binding site" evidence="1">
    <location>
        <position position="91"/>
    </location>
    <ligand>
        <name>a divalent metal cation</name>
        <dbReference type="ChEBI" id="CHEBI:60240"/>
    </ligand>
</feature>
<sequence>MRILVSNDDGYNAPGLEALVEALSGLGELTVVAPETNHSGASNSLTLNRPLTVRTASNGFIYVNGTPSDCVHVALTGLMDARPDLVVSGINNGANMGDDTLYSGTVAAASEGYLFGIPSIAFSLIEKGWQHIESAARAARQVVERQIAQPLAAPVLLNVNIPNRRYEDMKGYAVTRLGKRHPSEPVVRTTTPYGDTVYWIGPVGLAADATPGTDFHATAQGQVSVTPLRLDLTQHSQLDDVRNWAEPLCVNA</sequence>
<evidence type="ECO:0000255" key="1">
    <source>
        <dbReference type="HAMAP-Rule" id="MF_00060"/>
    </source>
</evidence>
<gene>
    <name evidence="1" type="primary">surE</name>
    <name type="ordered locus">BB3020</name>
</gene>
<name>SURE_BORBR</name>
<dbReference type="EC" id="3.1.3.5" evidence="1"/>
<dbReference type="EMBL" id="BX640446">
    <property type="protein sequence ID" value="CAE33512.1"/>
    <property type="molecule type" value="Genomic_DNA"/>
</dbReference>
<dbReference type="RefSeq" id="WP_003811017.1">
    <property type="nucleotide sequence ID" value="NC_002927.3"/>
</dbReference>
<dbReference type="SMR" id="Q7WI36"/>
<dbReference type="GeneID" id="93204839"/>
<dbReference type="KEGG" id="bbr:BB3020"/>
<dbReference type="eggNOG" id="COG0496">
    <property type="taxonomic scope" value="Bacteria"/>
</dbReference>
<dbReference type="HOGENOM" id="CLU_045192_1_2_4"/>
<dbReference type="Proteomes" id="UP000001027">
    <property type="component" value="Chromosome"/>
</dbReference>
<dbReference type="GO" id="GO:0005737">
    <property type="term" value="C:cytoplasm"/>
    <property type="evidence" value="ECO:0007669"/>
    <property type="project" value="UniProtKB-SubCell"/>
</dbReference>
<dbReference type="GO" id="GO:0008254">
    <property type="term" value="F:3'-nucleotidase activity"/>
    <property type="evidence" value="ECO:0007669"/>
    <property type="project" value="TreeGrafter"/>
</dbReference>
<dbReference type="GO" id="GO:0008253">
    <property type="term" value="F:5'-nucleotidase activity"/>
    <property type="evidence" value="ECO:0007669"/>
    <property type="project" value="UniProtKB-UniRule"/>
</dbReference>
<dbReference type="GO" id="GO:0004309">
    <property type="term" value="F:exopolyphosphatase activity"/>
    <property type="evidence" value="ECO:0007669"/>
    <property type="project" value="TreeGrafter"/>
</dbReference>
<dbReference type="GO" id="GO:0046872">
    <property type="term" value="F:metal ion binding"/>
    <property type="evidence" value="ECO:0007669"/>
    <property type="project" value="UniProtKB-UniRule"/>
</dbReference>
<dbReference type="GO" id="GO:0000166">
    <property type="term" value="F:nucleotide binding"/>
    <property type="evidence" value="ECO:0007669"/>
    <property type="project" value="UniProtKB-KW"/>
</dbReference>
<dbReference type="FunFam" id="3.40.1210.10:FF:000001">
    <property type="entry name" value="5'/3'-nucleotidase SurE"/>
    <property type="match status" value="1"/>
</dbReference>
<dbReference type="Gene3D" id="3.40.1210.10">
    <property type="entry name" value="Survival protein SurE-like phosphatase/nucleotidase"/>
    <property type="match status" value="1"/>
</dbReference>
<dbReference type="HAMAP" id="MF_00060">
    <property type="entry name" value="SurE"/>
    <property type="match status" value="1"/>
</dbReference>
<dbReference type="InterPro" id="IPR030048">
    <property type="entry name" value="SurE"/>
</dbReference>
<dbReference type="InterPro" id="IPR002828">
    <property type="entry name" value="SurE-like_Pase/nucleotidase"/>
</dbReference>
<dbReference type="InterPro" id="IPR036523">
    <property type="entry name" value="SurE-like_sf"/>
</dbReference>
<dbReference type="NCBIfam" id="NF001489">
    <property type="entry name" value="PRK00346.1-3"/>
    <property type="match status" value="1"/>
</dbReference>
<dbReference type="NCBIfam" id="NF001490">
    <property type="entry name" value="PRK00346.1-4"/>
    <property type="match status" value="1"/>
</dbReference>
<dbReference type="NCBIfam" id="TIGR00087">
    <property type="entry name" value="surE"/>
    <property type="match status" value="1"/>
</dbReference>
<dbReference type="PANTHER" id="PTHR30457">
    <property type="entry name" value="5'-NUCLEOTIDASE SURE"/>
    <property type="match status" value="1"/>
</dbReference>
<dbReference type="PANTHER" id="PTHR30457:SF12">
    <property type="entry name" value="5'_3'-NUCLEOTIDASE SURE"/>
    <property type="match status" value="1"/>
</dbReference>
<dbReference type="Pfam" id="PF01975">
    <property type="entry name" value="SurE"/>
    <property type="match status" value="1"/>
</dbReference>
<dbReference type="SUPFAM" id="SSF64167">
    <property type="entry name" value="SurE-like"/>
    <property type="match status" value="1"/>
</dbReference>
<keyword id="KW-0963">Cytoplasm</keyword>
<keyword id="KW-0378">Hydrolase</keyword>
<keyword id="KW-0479">Metal-binding</keyword>
<keyword id="KW-0547">Nucleotide-binding</keyword>
<protein>
    <recommendedName>
        <fullName evidence="1">5'-nucleotidase SurE</fullName>
        <ecNumber evidence="1">3.1.3.5</ecNumber>
    </recommendedName>
    <alternativeName>
        <fullName evidence="1">Nucleoside 5'-monophosphate phosphohydrolase</fullName>
    </alternativeName>
</protein>